<reference key="1">
    <citation type="journal article" date="2001" name="Lancet">
        <title>Whole genome sequencing of meticillin-resistant Staphylococcus aureus.</title>
        <authorList>
            <person name="Kuroda M."/>
            <person name="Ohta T."/>
            <person name="Uchiyama I."/>
            <person name="Baba T."/>
            <person name="Yuzawa H."/>
            <person name="Kobayashi I."/>
            <person name="Cui L."/>
            <person name="Oguchi A."/>
            <person name="Aoki K."/>
            <person name="Nagai Y."/>
            <person name="Lian J.-Q."/>
            <person name="Ito T."/>
            <person name="Kanamori M."/>
            <person name="Matsumaru H."/>
            <person name="Maruyama A."/>
            <person name="Murakami H."/>
            <person name="Hosoyama A."/>
            <person name="Mizutani-Ui Y."/>
            <person name="Takahashi N.K."/>
            <person name="Sawano T."/>
            <person name="Inoue R."/>
            <person name="Kaito C."/>
            <person name="Sekimizu K."/>
            <person name="Hirakawa H."/>
            <person name="Kuhara S."/>
            <person name="Goto S."/>
            <person name="Yabuzaki J."/>
            <person name="Kanehisa M."/>
            <person name="Yamashita A."/>
            <person name="Oshima K."/>
            <person name="Furuya K."/>
            <person name="Yoshino C."/>
            <person name="Shiba T."/>
            <person name="Hattori M."/>
            <person name="Ogasawara N."/>
            <person name="Hayashi H."/>
            <person name="Hiramatsu K."/>
        </authorList>
    </citation>
    <scope>NUCLEOTIDE SEQUENCE [LARGE SCALE GENOMIC DNA]</scope>
    <source>
        <strain>N315</strain>
    </source>
</reference>
<reference key="2">
    <citation type="journal article" date="2005" name="J. Microbiol. Methods">
        <title>Correlation of proteomic and transcriptomic profiles of Staphylococcus aureus during the post-exponential phase of growth.</title>
        <authorList>
            <person name="Scherl A."/>
            <person name="Francois P."/>
            <person name="Bento M."/>
            <person name="Deshusses J.M."/>
            <person name="Charbonnier Y."/>
            <person name="Converset V."/>
            <person name="Huyghe A."/>
            <person name="Walter N."/>
            <person name="Hoogland C."/>
            <person name="Appel R.D."/>
            <person name="Sanchez J.-C."/>
            <person name="Zimmermann-Ivol C.G."/>
            <person name="Corthals G.L."/>
            <person name="Hochstrasser D.F."/>
            <person name="Schrenzel J."/>
        </authorList>
    </citation>
    <scope>IDENTIFICATION BY MASS SPECTROMETRY</scope>
    <source>
        <strain>N315</strain>
    </source>
</reference>
<reference key="3">
    <citation type="submission" date="2007-10" db="UniProtKB">
        <title>Shotgun proteomic analysis of total and membrane protein extracts of S. aureus strain N315.</title>
        <authorList>
            <person name="Vaezzadeh A.R."/>
            <person name="Deshusses J."/>
            <person name="Lescuyer P."/>
            <person name="Hochstrasser D.F."/>
        </authorList>
    </citation>
    <scope>IDENTIFICATION BY MASS SPECTROMETRY [LARGE SCALE ANALYSIS]</scope>
    <source>
        <strain>N315</strain>
    </source>
</reference>
<feature type="chain" id="PRO_0000220349" description="UPF0355 protein SA0372">
    <location>
        <begin position="1"/>
        <end position="135"/>
    </location>
</feature>
<dbReference type="EMBL" id="BA000018">
    <property type="protein sequence ID" value="BAB41599.1"/>
    <property type="molecule type" value="Genomic_DNA"/>
</dbReference>
<dbReference type="PIR" id="D89805">
    <property type="entry name" value="D89805"/>
</dbReference>
<dbReference type="RefSeq" id="WP_000763767.1">
    <property type="nucleotide sequence ID" value="NC_002745.2"/>
</dbReference>
<dbReference type="EnsemblBacteria" id="BAB41599">
    <property type="protein sequence ID" value="BAB41599"/>
    <property type="gene ID" value="BAB41599"/>
</dbReference>
<dbReference type="KEGG" id="sau:SA0372"/>
<dbReference type="HOGENOM" id="CLU_152601_0_0_9"/>
<dbReference type="InterPro" id="IPR025889">
    <property type="entry name" value="GSP17M-like_dom"/>
</dbReference>
<dbReference type="Pfam" id="PF11181">
    <property type="entry name" value="YflT"/>
    <property type="match status" value="1"/>
</dbReference>
<accession>Q7A7I6</accession>
<protein>
    <recommendedName>
        <fullName>UPF0355 protein SA0372</fullName>
    </recommendedName>
</protein>
<proteinExistence type="evidence at protein level"/>
<sequence length="135" mass="15136">MADITVVNDTGELYNVINQKKSEGYLESELTIISKSKLHLNDLHDSEISLISTSGTFSDRMTKLLTGEDGEHAVLSRYNLAPDELEKYKQLILDDKMLVVAVRDKSSHKEVQEHNSAYEEIDITHFAEASKGPKA</sequence>
<organism>
    <name type="scientific">Staphylococcus aureus (strain N315)</name>
    <dbReference type="NCBI Taxonomy" id="158879"/>
    <lineage>
        <taxon>Bacteria</taxon>
        <taxon>Bacillati</taxon>
        <taxon>Bacillota</taxon>
        <taxon>Bacilli</taxon>
        <taxon>Bacillales</taxon>
        <taxon>Staphylococcaceae</taxon>
        <taxon>Staphylococcus</taxon>
    </lineage>
</organism>
<evidence type="ECO:0000305" key="1"/>
<name>UP355_STAAN</name>
<gene>
    <name type="ordered locus">SA0372</name>
</gene>
<comment type="similarity">
    <text evidence="1">Belongs to the UPF0355 family.</text>
</comment>